<organism>
    <name type="scientific">Coccidioides immitis (strain RS)</name>
    <name type="common">Valley fever fungus</name>
    <dbReference type="NCBI Taxonomy" id="246410"/>
    <lineage>
        <taxon>Eukaryota</taxon>
        <taxon>Fungi</taxon>
        <taxon>Dikarya</taxon>
        <taxon>Ascomycota</taxon>
        <taxon>Pezizomycotina</taxon>
        <taxon>Eurotiomycetes</taxon>
        <taxon>Eurotiomycetidae</taxon>
        <taxon>Onygenales</taxon>
        <taxon>Onygenaceae</taxon>
        <taxon>Coccidioides</taxon>
    </lineage>
</organism>
<gene>
    <name type="primary">TPC1</name>
    <name type="ORF">CIMG_01423</name>
</gene>
<name>TPC1_COCIM</name>
<evidence type="ECO:0000250" key="1"/>
<evidence type="ECO:0000255" key="2"/>
<evidence type="ECO:0000305" key="3"/>
<reference key="1">
    <citation type="journal article" date="2009" name="Genome Res.">
        <title>Comparative genomic analyses of the human fungal pathogens Coccidioides and their relatives.</title>
        <authorList>
            <person name="Sharpton T.J."/>
            <person name="Stajich J.E."/>
            <person name="Rounsley S.D."/>
            <person name="Gardner M.J."/>
            <person name="Wortman J.R."/>
            <person name="Jordar V.S."/>
            <person name="Maiti R."/>
            <person name="Kodira C.D."/>
            <person name="Neafsey D.E."/>
            <person name="Zeng Q."/>
            <person name="Hung C.-Y."/>
            <person name="McMahan C."/>
            <person name="Muszewska A."/>
            <person name="Grynberg M."/>
            <person name="Mandel M.A."/>
            <person name="Kellner E.M."/>
            <person name="Barker B.M."/>
            <person name="Galgiani J.N."/>
            <person name="Orbach M.J."/>
            <person name="Kirkland T.N."/>
            <person name="Cole G.T."/>
            <person name="Henn M.R."/>
            <person name="Birren B.W."/>
            <person name="Taylor J.W."/>
        </authorList>
    </citation>
    <scope>NUCLEOTIDE SEQUENCE [LARGE SCALE GENOMIC DNA]</scope>
    <source>
        <strain>RS</strain>
    </source>
</reference>
<reference key="2">
    <citation type="journal article" date="2010" name="Genome Res.">
        <title>Population genomic sequencing of Coccidioides fungi reveals recent hybridization and transposon control.</title>
        <authorList>
            <person name="Neafsey D.E."/>
            <person name="Barker B.M."/>
            <person name="Sharpton T.J."/>
            <person name="Stajich J.E."/>
            <person name="Park D.J."/>
            <person name="Whiston E."/>
            <person name="Hung C.-Y."/>
            <person name="McMahan C."/>
            <person name="White J."/>
            <person name="Sykes S."/>
            <person name="Heiman D."/>
            <person name="Young S."/>
            <person name="Zeng Q."/>
            <person name="Abouelleil A."/>
            <person name="Aftuck L."/>
            <person name="Bessette D."/>
            <person name="Brown A."/>
            <person name="FitzGerald M."/>
            <person name="Lui A."/>
            <person name="Macdonald J.P."/>
            <person name="Priest M."/>
            <person name="Orbach M.J."/>
            <person name="Galgiani J.N."/>
            <person name="Kirkland T.N."/>
            <person name="Cole G.T."/>
            <person name="Birren B.W."/>
            <person name="Henn M.R."/>
            <person name="Taylor J.W."/>
            <person name="Rounsley S.D."/>
        </authorList>
    </citation>
    <scope>GENOME REANNOTATION</scope>
    <source>
        <strain>RS</strain>
    </source>
</reference>
<proteinExistence type="inferred from homology"/>
<protein>
    <recommendedName>
        <fullName>Mitochondrial thiamine pyrophosphate carrier 1</fullName>
    </recommendedName>
</protein>
<dbReference type="EMBL" id="GG704911">
    <property type="protein sequence ID" value="EAS36069.3"/>
    <property type="molecule type" value="Genomic_DNA"/>
</dbReference>
<dbReference type="RefSeq" id="XP_001247652.1">
    <property type="nucleotide sequence ID" value="XM_001247651.2"/>
</dbReference>
<dbReference type="SMR" id="Q1E7P0"/>
<dbReference type="FunCoup" id="Q1E7P0">
    <property type="interactions" value="29"/>
</dbReference>
<dbReference type="STRING" id="246410.Q1E7P0"/>
<dbReference type="GeneID" id="4567960"/>
<dbReference type="KEGG" id="cim:CIMG_01423"/>
<dbReference type="VEuPathDB" id="FungiDB:CIMG_01423"/>
<dbReference type="InParanoid" id="Q1E7P0"/>
<dbReference type="OMA" id="MYVCYGA"/>
<dbReference type="OrthoDB" id="18574at2759"/>
<dbReference type="Proteomes" id="UP000001261">
    <property type="component" value="Unassembled WGS sequence"/>
</dbReference>
<dbReference type="GO" id="GO:0005743">
    <property type="term" value="C:mitochondrial inner membrane"/>
    <property type="evidence" value="ECO:0007669"/>
    <property type="project" value="UniProtKB-SubCell"/>
</dbReference>
<dbReference type="GO" id="GO:0055085">
    <property type="term" value="P:transmembrane transport"/>
    <property type="evidence" value="ECO:0007669"/>
    <property type="project" value="InterPro"/>
</dbReference>
<dbReference type="FunFam" id="1.50.40.10:FF:000011">
    <property type="entry name" value="Mitochondrial thiamine pyrophosphate carrier 1"/>
    <property type="match status" value="1"/>
</dbReference>
<dbReference type="Gene3D" id="1.50.40.10">
    <property type="entry name" value="Mitochondrial carrier domain"/>
    <property type="match status" value="1"/>
</dbReference>
<dbReference type="InterPro" id="IPR002067">
    <property type="entry name" value="Mit_carrier"/>
</dbReference>
<dbReference type="InterPro" id="IPR018108">
    <property type="entry name" value="Mitochondrial_sb/sol_carrier"/>
</dbReference>
<dbReference type="InterPro" id="IPR023395">
    <property type="entry name" value="Mt_carrier_dom_sf"/>
</dbReference>
<dbReference type="PANTHER" id="PTHR24089">
    <property type="entry name" value="SOLUTE CARRIER FAMILY 25"/>
    <property type="match status" value="1"/>
</dbReference>
<dbReference type="Pfam" id="PF00153">
    <property type="entry name" value="Mito_carr"/>
    <property type="match status" value="3"/>
</dbReference>
<dbReference type="PRINTS" id="PR00926">
    <property type="entry name" value="MITOCARRIER"/>
</dbReference>
<dbReference type="SUPFAM" id="SSF103506">
    <property type="entry name" value="Mitochondrial carrier"/>
    <property type="match status" value="1"/>
</dbReference>
<dbReference type="PROSITE" id="PS50920">
    <property type="entry name" value="SOLCAR"/>
    <property type="match status" value="3"/>
</dbReference>
<comment type="function">
    <text evidence="1">Mitochondrial transporter that mediates uptake of thiamine pyrophosphate (ThPP) into mitochondria.</text>
</comment>
<comment type="subcellular location">
    <subcellularLocation>
        <location evidence="1">Mitochondrion inner membrane</location>
        <topology evidence="1">Multi-pass membrane protein</topology>
    </subcellularLocation>
</comment>
<comment type="similarity">
    <text evidence="3">Belongs to the mitochondrial carrier (TC 2.A.29) family.</text>
</comment>
<accession>Q1E7P0</accession>
<accession>J3KJF0</accession>
<feature type="chain" id="PRO_0000320463" description="Mitochondrial thiamine pyrophosphate carrier 1">
    <location>
        <begin position="1"/>
        <end position="319"/>
    </location>
</feature>
<feature type="transmembrane region" description="Helical; Name=1" evidence="2">
    <location>
        <begin position="17"/>
        <end position="35"/>
    </location>
</feature>
<feature type="transmembrane region" description="Helical; Name=2" evidence="2">
    <location>
        <begin position="91"/>
        <end position="107"/>
    </location>
</feature>
<feature type="transmembrane region" description="Helical; Name=3" evidence="2">
    <location>
        <begin position="127"/>
        <end position="147"/>
    </location>
</feature>
<feature type="transmembrane region" description="Helical; Name=4" evidence="2">
    <location>
        <begin position="182"/>
        <end position="201"/>
    </location>
</feature>
<feature type="transmembrane region" description="Helical; Name=5" evidence="2">
    <location>
        <begin position="221"/>
        <end position="237"/>
    </location>
</feature>
<feature type="transmembrane region" description="Helical; Name=6" evidence="2">
    <location>
        <begin position="284"/>
        <end position="301"/>
    </location>
</feature>
<feature type="repeat" description="Solcar 1">
    <location>
        <begin position="12"/>
        <end position="110"/>
    </location>
</feature>
<feature type="repeat" description="Solcar 2">
    <location>
        <begin position="121"/>
        <end position="207"/>
    </location>
</feature>
<feature type="repeat" description="Solcar 3">
    <location>
        <begin position="214"/>
        <end position="309"/>
    </location>
</feature>
<keyword id="KW-0472">Membrane</keyword>
<keyword id="KW-0496">Mitochondrion</keyword>
<keyword id="KW-0999">Mitochondrion inner membrane</keyword>
<keyword id="KW-1185">Reference proteome</keyword>
<keyword id="KW-0677">Repeat</keyword>
<keyword id="KW-0812">Transmembrane</keyword>
<keyword id="KW-1133">Transmembrane helix</keyword>
<keyword id="KW-0813">Transport</keyword>
<sequence length="319" mass="34867">MSAGGEHLKDEGQRYQVVAAGAIAGMVSRFCVAPLDVVKIRLQLQIHSLSDPLSHKNIRGPVYKGTISTLKAIFREEGITGLWKGNIPAELLYIFYGAIQFTTYRTVTQSLHTLPPPYRLPQPAESFVSGATAGGIGTFTTYPFDLLRTRFAAQGNDKIYPSLLTAIRSIHAHEGSRGFFRGVSAAVAQIVPYMGLFFATYESVRVPISSLHLPFGSGDATAGVIASVIAKTGVFPLDLVRKRLQVQGPTRSRYIHQNIPEYNGVLSTMKMVLRDGGVRGLYRGLTVSLIKAAPASAVTMWTYERVLKILKEINQEAIQ</sequence>